<sequence>MAQTNSNKKTVELNRTSLYWGLLLIFVLAVLFSSYIFN</sequence>
<reference key="1">
    <citation type="journal article" date="1988" name="Curr. Genet.">
        <title>Organization of the psbE, psbF, orf38, and orf42 gene loci on the Euglena gracilis chloroplast genome.</title>
        <authorList>
            <person name="Cushman J.C."/>
            <person name="Christopher D.A."/>
            <person name="Little M.C."/>
            <person name="Hallick R.B."/>
            <person name="Price C.A."/>
        </authorList>
    </citation>
    <scope>NUCLEOTIDE SEQUENCE [GENOMIC DNA]</scope>
    <source>
        <strain>Z / UTEX 753</strain>
    </source>
</reference>
<reference key="2">
    <citation type="journal article" date="1993" name="Nucleic Acids Res.">
        <title>Complete sequence of Euglena gracilis chloroplast DNA.</title>
        <authorList>
            <person name="Hallick R.B."/>
            <person name="Hong L."/>
            <person name="Drager R.G."/>
            <person name="Favreau M.R."/>
            <person name="Monfort A."/>
            <person name="Orsat B."/>
            <person name="Spielmann A."/>
            <person name="Stutz E."/>
        </authorList>
    </citation>
    <scope>NUCLEOTIDE SEQUENCE [LARGE SCALE GENOMIC DNA]</scope>
    <source>
        <strain>Z / UTEX 753</strain>
    </source>
</reference>
<organism>
    <name type="scientific">Euglena gracilis</name>
    <dbReference type="NCBI Taxonomy" id="3039"/>
    <lineage>
        <taxon>Eukaryota</taxon>
        <taxon>Discoba</taxon>
        <taxon>Euglenozoa</taxon>
        <taxon>Euglenida</taxon>
        <taxon>Spirocuta</taxon>
        <taxon>Euglenophyceae</taxon>
        <taxon>Euglenales</taxon>
        <taxon>Euglenaceae</taxon>
        <taxon>Euglena</taxon>
    </lineage>
</organism>
<keyword id="KW-0150">Chloroplast</keyword>
<keyword id="KW-0472">Membrane</keyword>
<keyword id="KW-0602">Photosynthesis</keyword>
<keyword id="KW-0604">Photosystem II</keyword>
<keyword id="KW-0934">Plastid</keyword>
<keyword id="KW-0674">Reaction center</keyword>
<keyword id="KW-0793">Thylakoid</keyword>
<keyword id="KW-0812">Transmembrane</keyword>
<keyword id="KW-1133">Transmembrane helix</keyword>
<accession>P12228</accession>
<geneLocation type="chloroplast"/>
<gene>
    <name evidence="1" type="primary">psbL</name>
</gene>
<dbReference type="EMBL" id="Z11874">
    <property type="protein sequence ID" value="CAA77914.1"/>
    <property type="molecule type" value="Genomic_DNA"/>
</dbReference>
<dbReference type="EMBL" id="X07073">
    <property type="protein sequence ID" value="CAA30110.1"/>
    <property type="molecule type" value="Genomic_DNA"/>
</dbReference>
<dbReference type="EMBL" id="X70810">
    <property type="protein sequence ID" value="CAA50097.1"/>
    <property type="molecule type" value="Genomic_DNA"/>
</dbReference>
<dbReference type="PIR" id="S00691">
    <property type="entry name" value="S00691"/>
</dbReference>
<dbReference type="RefSeq" id="NP_041910.1">
    <property type="nucleotide sequence ID" value="NC_001603.2"/>
</dbReference>
<dbReference type="SMR" id="P12228"/>
<dbReference type="GeneID" id="807527"/>
<dbReference type="GO" id="GO:0009535">
    <property type="term" value="C:chloroplast thylakoid membrane"/>
    <property type="evidence" value="ECO:0007669"/>
    <property type="project" value="UniProtKB-SubCell"/>
</dbReference>
<dbReference type="GO" id="GO:0009539">
    <property type="term" value="C:photosystem II reaction center"/>
    <property type="evidence" value="ECO:0007669"/>
    <property type="project" value="InterPro"/>
</dbReference>
<dbReference type="GO" id="GO:0015979">
    <property type="term" value="P:photosynthesis"/>
    <property type="evidence" value="ECO:0007669"/>
    <property type="project" value="UniProtKB-UniRule"/>
</dbReference>
<dbReference type="HAMAP" id="MF_01317">
    <property type="entry name" value="PSII_PsbL"/>
    <property type="match status" value="1"/>
</dbReference>
<dbReference type="InterPro" id="IPR003372">
    <property type="entry name" value="PSII_PsbL"/>
</dbReference>
<dbReference type="InterPro" id="IPR037266">
    <property type="entry name" value="PSII_PsbL_sf"/>
</dbReference>
<dbReference type="Pfam" id="PF02419">
    <property type="entry name" value="PsbL"/>
    <property type="match status" value="1"/>
</dbReference>
<dbReference type="SUPFAM" id="SSF161017">
    <property type="entry name" value="Photosystem II reaction center protein L, PsbL"/>
    <property type="match status" value="1"/>
</dbReference>
<name>PSBL_EUGGR</name>
<proteinExistence type="inferred from homology"/>
<protein>
    <recommendedName>
        <fullName evidence="1">Photosystem II reaction center protein L</fullName>
        <shortName evidence="1">PSII-L</shortName>
    </recommendedName>
</protein>
<comment type="function">
    <text evidence="1">One of the components of the core complex of photosystem II (PSII). PSII is a light-driven water:plastoquinone oxidoreductase that uses light energy to abstract electrons from H(2)O, generating O(2) and a proton gradient subsequently used for ATP formation. It consists of a core antenna complex that captures photons, and an electron transfer chain that converts photonic excitation into a charge separation. This subunit is found at the monomer-monomer interface and is required for correct PSII assembly and/or dimerization.</text>
</comment>
<comment type="subunit">
    <text evidence="2">PSII is composed of 1 copy each of membrane proteins PsbA, PsbB, PsbC, PsbD, PsbE, PsbF, PsbH, PsbI, PsbJ, PsbK, PsbL, PsbM, PsbT, PsbY, PsbZ, Psb30/Ycf12, at least 3 peripheral proteins of the oxygen-evolving complex and a large number of cofactors. It forms dimeric complexes.</text>
</comment>
<comment type="subcellular location">
    <subcellularLocation>
        <location evidence="1">Plastid</location>
        <location evidence="1">Chloroplast thylakoid membrane</location>
        <topology evidence="1">Single-pass membrane protein</topology>
    </subcellularLocation>
</comment>
<comment type="similarity">
    <text evidence="1">Belongs to the PsbL family.</text>
</comment>
<feature type="chain" id="PRO_0000219713" description="Photosystem II reaction center protein L">
    <location>
        <begin position="1"/>
        <end position="38"/>
    </location>
</feature>
<feature type="transmembrane region" description="Helical" evidence="1">
    <location>
        <begin position="17"/>
        <end position="37"/>
    </location>
</feature>
<evidence type="ECO:0000255" key="1">
    <source>
        <dbReference type="HAMAP-Rule" id="MF_01317"/>
    </source>
</evidence>
<evidence type="ECO:0000305" key="2"/>